<comment type="function">
    <text evidence="1">Catalyzes the sequential NAD-dependent oxidations of L-histidinol to L-histidinaldehyde and then to L-histidine.</text>
</comment>
<comment type="catalytic activity">
    <reaction evidence="1">
        <text>L-histidinol + 2 NAD(+) + H2O = L-histidine + 2 NADH + 3 H(+)</text>
        <dbReference type="Rhea" id="RHEA:20641"/>
        <dbReference type="ChEBI" id="CHEBI:15377"/>
        <dbReference type="ChEBI" id="CHEBI:15378"/>
        <dbReference type="ChEBI" id="CHEBI:57540"/>
        <dbReference type="ChEBI" id="CHEBI:57595"/>
        <dbReference type="ChEBI" id="CHEBI:57699"/>
        <dbReference type="ChEBI" id="CHEBI:57945"/>
        <dbReference type="EC" id="1.1.1.23"/>
    </reaction>
</comment>
<comment type="cofactor">
    <cofactor evidence="1">
        <name>Zn(2+)</name>
        <dbReference type="ChEBI" id="CHEBI:29105"/>
    </cofactor>
    <text evidence="1">Binds 1 zinc ion per subunit.</text>
</comment>
<comment type="pathway">
    <text evidence="1">Amino-acid biosynthesis; L-histidine biosynthesis; L-histidine from 5-phospho-alpha-D-ribose 1-diphosphate: step 9/9.</text>
</comment>
<comment type="similarity">
    <text evidence="1">Belongs to the histidinol dehydrogenase family.</text>
</comment>
<organism>
    <name type="scientific">Pseudoalteromonas translucida (strain TAC 125)</name>
    <dbReference type="NCBI Taxonomy" id="326442"/>
    <lineage>
        <taxon>Bacteria</taxon>
        <taxon>Pseudomonadati</taxon>
        <taxon>Pseudomonadota</taxon>
        <taxon>Gammaproteobacteria</taxon>
        <taxon>Alteromonadales</taxon>
        <taxon>Pseudoalteromonadaceae</taxon>
        <taxon>Pseudoalteromonas</taxon>
    </lineage>
</organism>
<gene>
    <name evidence="1" type="primary">hisD</name>
    <name type="ordered locus">PSHAb0493</name>
</gene>
<feature type="chain" id="PRO_0000135818" description="Histidinol dehydrogenase">
    <location>
        <begin position="1"/>
        <end position="433"/>
    </location>
</feature>
<feature type="active site" description="Proton acceptor" evidence="1">
    <location>
        <position position="325"/>
    </location>
</feature>
<feature type="active site" description="Proton acceptor" evidence="1">
    <location>
        <position position="326"/>
    </location>
</feature>
<feature type="binding site" evidence="1">
    <location>
        <position position="236"/>
    </location>
    <ligand>
        <name>substrate</name>
    </ligand>
</feature>
<feature type="binding site" evidence="1">
    <location>
        <position position="258"/>
    </location>
    <ligand>
        <name>substrate</name>
    </ligand>
</feature>
<feature type="binding site" evidence="1">
    <location>
        <position position="258"/>
    </location>
    <ligand>
        <name>Zn(2+)</name>
        <dbReference type="ChEBI" id="CHEBI:29105"/>
    </ligand>
</feature>
<feature type="binding site" evidence="1">
    <location>
        <position position="261"/>
    </location>
    <ligand>
        <name>substrate</name>
    </ligand>
</feature>
<feature type="binding site" evidence="1">
    <location>
        <position position="261"/>
    </location>
    <ligand>
        <name>Zn(2+)</name>
        <dbReference type="ChEBI" id="CHEBI:29105"/>
    </ligand>
</feature>
<feature type="binding site" evidence="1">
    <location>
        <position position="326"/>
    </location>
    <ligand>
        <name>substrate</name>
    </ligand>
</feature>
<feature type="binding site" evidence="1">
    <location>
        <position position="359"/>
    </location>
    <ligand>
        <name>substrate</name>
    </ligand>
</feature>
<feature type="binding site" evidence="1">
    <location>
        <position position="359"/>
    </location>
    <ligand>
        <name>Zn(2+)</name>
        <dbReference type="ChEBI" id="CHEBI:29105"/>
    </ligand>
</feature>
<feature type="binding site" evidence="1">
    <location>
        <position position="413"/>
    </location>
    <ligand>
        <name>substrate</name>
    </ligand>
</feature>
<feature type="binding site" evidence="1">
    <location>
        <position position="418"/>
    </location>
    <ligand>
        <name>substrate</name>
    </ligand>
</feature>
<feature type="binding site" evidence="1">
    <location>
        <position position="418"/>
    </location>
    <ligand>
        <name>Zn(2+)</name>
        <dbReference type="ChEBI" id="CHEBI:29105"/>
    </ligand>
</feature>
<evidence type="ECO:0000255" key="1">
    <source>
        <dbReference type="HAMAP-Rule" id="MF_01024"/>
    </source>
</evidence>
<name>HISX_PSET1</name>
<keyword id="KW-0028">Amino-acid biosynthesis</keyword>
<keyword id="KW-0368">Histidine biosynthesis</keyword>
<keyword id="KW-0479">Metal-binding</keyword>
<keyword id="KW-0520">NAD</keyword>
<keyword id="KW-0560">Oxidoreductase</keyword>
<keyword id="KW-1185">Reference proteome</keyword>
<keyword id="KW-0862">Zinc</keyword>
<sequence length="433" mass="45811">MLRWNEESSQAQAAALTRPAVSASAKVEAICKTILAKVKEQGDDALLDMAKEFDNRANPRLRVPLDEINASEQALSAELKYAIDTAYANVKCFHEAQLPKDIKLSTQPGVVCELKYQAIEAVGIYVPGGSAPLPSSVIMQGVLAQLSGAKTVVLATPVQGDKAINPAILYAAKLCGITTLIESGGAGAIAAMAYGTESVPKVNKIFGPGNSFVTMAKQLVAQTVPGMAIDMPAGPSEVLVIADERANPEFIAADLLSQAEHGADSQVILLCNSESIIEQTQQALTRQLAKLSRKETAEQALANSSLILVDSIAQAFDVSAQYGPEHLILQLADSTPYLDKVKNAGSVFVGDYTPESAGDYASGTNHVLPTYGYSASYSSLNLLDFFRTYTVQTITKSGLTQLSKAILPLANAEGLDAHANAVSIRLEAIKNEQ</sequence>
<dbReference type="EC" id="1.1.1.23" evidence="1"/>
<dbReference type="EMBL" id="CR954247">
    <property type="protein sequence ID" value="CAI89530.1"/>
    <property type="molecule type" value="Genomic_DNA"/>
</dbReference>
<dbReference type="SMR" id="Q3ICF0"/>
<dbReference type="STRING" id="326442.PSHAb0493"/>
<dbReference type="KEGG" id="pha:PSHAb0493"/>
<dbReference type="PATRIC" id="fig|326442.8.peg.3401"/>
<dbReference type="eggNOG" id="COG0141">
    <property type="taxonomic scope" value="Bacteria"/>
</dbReference>
<dbReference type="HOGENOM" id="CLU_006732_3_0_6"/>
<dbReference type="BioCyc" id="PHAL326442:PSHA_RS17205-MONOMER"/>
<dbReference type="UniPathway" id="UPA00031">
    <property type="reaction ID" value="UER00014"/>
</dbReference>
<dbReference type="Proteomes" id="UP000006843">
    <property type="component" value="Chromosome II"/>
</dbReference>
<dbReference type="GO" id="GO:0005829">
    <property type="term" value="C:cytosol"/>
    <property type="evidence" value="ECO:0007669"/>
    <property type="project" value="TreeGrafter"/>
</dbReference>
<dbReference type="GO" id="GO:0004399">
    <property type="term" value="F:histidinol dehydrogenase activity"/>
    <property type="evidence" value="ECO:0007669"/>
    <property type="project" value="UniProtKB-UniRule"/>
</dbReference>
<dbReference type="GO" id="GO:0051287">
    <property type="term" value="F:NAD binding"/>
    <property type="evidence" value="ECO:0007669"/>
    <property type="project" value="InterPro"/>
</dbReference>
<dbReference type="GO" id="GO:0008270">
    <property type="term" value="F:zinc ion binding"/>
    <property type="evidence" value="ECO:0007669"/>
    <property type="project" value="UniProtKB-UniRule"/>
</dbReference>
<dbReference type="GO" id="GO:0000105">
    <property type="term" value="P:L-histidine biosynthetic process"/>
    <property type="evidence" value="ECO:0007669"/>
    <property type="project" value="UniProtKB-UniRule"/>
</dbReference>
<dbReference type="CDD" id="cd06572">
    <property type="entry name" value="Histidinol_dh"/>
    <property type="match status" value="1"/>
</dbReference>
<dbReference type="FunFam" id="3.40.50.1980:FF:000001">
    <property type="entry name" value="Histidinol dehydrogenase"/>
    <property type="match status" value="1"/>
</dbReference>
<dbReference type="Gene3D" id="1.20.5.1300">
    <property type="match status" value="1"/>
</dbReference>
<dbReference type="Gene3D" id="3.40.50.1980">
    <property type="entry name" value="Nitrogenase molybdenum iron protein domain"/>
    <property type="match status" value="2"/>
</dbReference>
<dbReference type="HAMAP" id="MF_01024">
    <property type="entry name" value="HisD"/>
    <property type="match status" value="1"/>
</dbReference>
<dbReference type="InterPro" id="IPR016161">
    <property type="entry name" value="Ald_DH/histidinol_DH"/>
</dbReference>
<dbReference type="InterPro" id="IPR001692">
    <property type="entry name" value="Histidinol_DH_CS"/>
</dbReference>
<dbReference type="InterPro" id="IPR022695">
    <property type="entry name" value="Histidinol_DH_monofunct"/>
</dbReference>
<dbReference type="InterPro" id="IPR012131">
    <property type="entry name" value="Hstdl_DH"/>
</dbReference>
<dbReference type="NCBIfam" id="TIGR00069">
    <property type="entry name" value="hisD"/>
    <property type="match status" value="1"/>
</dbReference>
<dbReference type="PANTHER" id="PTHR21256:SF2">
    <property type="entry name" value="HISTIDINE BIOSYNTHESIS TRIFUNCTIONAL PROTEIN"/>
    <property type="match status" value="1"/>
</dbReference>
<dbReference type="PANTHER" id="PTHR21256">
    <property type="entry name" value="HISTIDINOL DEHYDROGENASE HDH"/>
    <property type="match status" value="1"/>
</dbReference>
<dbReference type="Pfam" id="PF00815">
    <property type="entry name" value="Histidinol_dh"/>
    <property type="match status" value="1"/>
</dbReference>
<dbReference type="PIRSF" id="PIRSF000099">
    <property type="entry name" value="Histidinol_dh"/>
    <property type="match status" value="1"/>
</dbReference>
<dbReference type="PRINTS" id="PR00083">
    <property type="entry name" value="HOLDHDRGNASE"/>
</dbReference>
<dbReference type="SUPFAM" id="SSF53720">
    <property type="entry name" value="ALDH-like"/>
    <property type="match status" value="1"/>
</dbReference>
<dbReference type="PROSITE" id="PS00611">
    <property type="entry name" value="HISOL_DEHYDROGENASE"/>
    <property type="match status" value="1"/>
</dbReference>
<accession>Q3ICF0</accession>
<reference key="1">
    <citation type="journal article" date="2005" name="Genome Res.">
        <title>Coping with cold: the genome of the versatile marine Antarctica bacterium Pseudoalteromonas haloplanktis TAC125.</title>
        <authorList>
            <person name="Medigue C."/>
            <person name="Krin E."/>
            <person name="Pascal G."/>
            <person name="Barbe V."/>
            <person name="Bernsel A."/>
            <person name="Bertin P.N."/>
            <person name="Cheung F."/>
            <person name="Cruveiller S."/>
            <person name="D'Amico S."/>
            <person name="Duilio A."/>
            <person name="Fang G."/>
            <person name="Feller G."/>
            <person name="Ho C."/>
            <person name="Mangenot S."/>
            <person name="Marino G."/>
            <person name="Nilsson J."/>
            <person name="Parrilli E."/>
            <person name="Rocha E.P.C."/>
            <person name="Rouy Z."/>
            <person name="Sekowska A."/>
            <person name="Tutino M.L."/>
            <person name="Vallenet D."/>
            <person name="von Heijne G."/>
            <person name="Danchin A."/>
        </authorList>
    </citation>
    <scope>NUCLEOTIDE SEQUENCE [LARGE SCALE GENOMIC DNA]</scope>
    <source>
        <strain>TAC 125</strain>
    </source>
</reference>
<proteinExistence type="inferred from homology"/>
<protein>
    <recommendedName>
        <fullName evidence="1">Histidinol dehydrogenase</fullName>
        <shortName evidence="1">HDH</shortName>
        <ecNumber evidence="1">1.1.1.23</ecNumber>
    </recommendedName>
</protein>